<reference key="1">
    <citation type="journal article" date="2008" name="PLoS ONE">
        <title>Comparative analysis of Acinetobacters: three genomes for three lifestyles.</title>
        <authorList>
            <person name="Vallenet D."/>
            <person name="Nordmann P."/>
            <person name="Barbe V."/>
            <person name="Poirel L."/>
            <person name="Mangenot S."/>
            <person name="Bataille E."/>
            <person name="Dossat C."/>
            <person name="Gas S."/>
            <person name="Kreimeyer A."/>
            <person name="Lenoble P."/>
            <person name="Oztas S."/>
            <person name="Poulain J."/>
            <person name="Segurens B."/>
            <person name="Robert C."/>
            <person name="Abergel C."/>
            <person name="Claverie J.-M."/>
            <person name="Raoult D."/>
            <person name="Medigue C."/>
            <person name="Weissenbach J."/>
            <person name="Cruveiller S."/>
        </authorList>
    </citation>
    <scope>NUCLEOTIDE SEQUENCE [LARGE SCALE GENOMIC DNA]</scope>
    <source>
        <strain>SDF</strain>
    </source>
</reference>
<protein>
    <recommendedName>
        <fullName evidence="1">Large ribosomal subunit protein uL5</fullName>
    </recommendedName>
    <alternativeName>
        <fullName evidence="2">50S ribosomal protein L5</fullName>
    </alternativeName>
</protein>
<keyword id="KW-0687">Ribonucleoprotein</keyword>
<keyword id="KW-0689">Ribosomal protein</keyword>
<keyword id="KW-0694">RNA-binding</keyword>
<keyword id="KW-0699">rRNA-binding</keyword>
<keyword id="KW-0820">tRNA-binding</keyword>
<proteinExistence type="inferred from homology"/>
<dbReference type="EMBL" id="CU468230">
    <property type="protein sequence ID" value="CAO99826.2"/>
    <property type="molecule type" value="Genomic_DNA"/>
</dbReference>
<dbReference type="SMR" id="B0VQT0"/>
<dbReference type="KEGG" id="abm:ABSDF0435"/>
<dbReference type="HOGENOM" id="CLU_061015_2_1_6"/>
<dbReference type="Proteomes" id="UP000001741">
    <property type="component" value="Chromosome"/>
</dbReference>
<dbReference type="GO" id="GO:1990904">
    <property type="term" value="C:ribonucleoprotein complex"/>
    <property type="evidence" value="ECO:0007669"/>
    <property type="project" value="UniProtKB-KW"/>
</dbReference>
<dbReference type="GO" id="GO:0005840">
    <property type="term" value="C:ribosome"/>
    <property type="evidence" value="ECO:0007669"/>
    <property type="project" value="UniProtKB-KW"/>
</dbReference>
<dbReference type="GO" id="GO:0019843">
    <property type="term" value="F:rRNA binding"/>
    <property type="evidence" value="ECO:0007669"/>
    <property type="project" value="UniProtKB-UniRule"/>
</dbReference>
<dbReference type="GO" id="GO:0003735">
    <property type="term" value="F:structural constituent of ribosome"/>
    <property type="evidence" value="ECO:0007669"/>
    <property type="project" value="InterPro"/>
</dbReference>
<dbReference type="GO" id="GO:0000049">
    <property type="term" value="F:tRNA binding"/>
    <property type="evidence" value="ECO:0007669"/>
    <property type="project" value="UniProtKB-UniRule"/>
</dbReference>
<dbReference type="GO" id="GO:0006412">
    <property type="term" value="P:translation"/>
    <property type="evidence" value="ECO:0007669"/>
    <property type="project" value="UniProtKB-UniRule"/>
</dbReference>
<dbReference type="FunFam" id="3.30.1440.10:FF:000001">
    <property type="entry name" value="50S ribosomal protein L5"/>
    <property type="match status" value="1"/>
</dbReference>
<dbReference type="Gene3D" id="3.30.1440.10">
    <property type="match status" value="1"/>
</dbReference>
<dbReference type="HAMAP" id="MF_01333_B">
    <property type="entry name" value="Ribosomal_uL5_B"/>
    <property type="match status" value="1"/>
</dbReference>
<dbReference type="InterPro" id="IPR002132">
    <property type="entry name" value="Ribosomal_uL5"/>
</dbReference>
<dbReference type="InterPro" id="IPR020930">
    <property type="entry name" value="Ribosomal_uL5_bac-type"/>
</dbReference>
<dbReference type="InterPro" id="IPR031309">
    <property type="entry name" value="Ribosomal_uL5_C"/>
</dbReference>
<dbReference type="InterPro" id="IPR020929">
    <property type="entry name" value="Ribosomal_uL5_CS"/>
</dbReference>
<dbReference type="InterPro" id="IPR022803">
    <property type="entry name" value="Ribosomal_uL5_dom_sf"/>
</dbReference>
<dbReference type="InterPro" id="IPR031310">
    <property type="entry name" value="Ribosomal_uL5_N"/>
</dbReference>
<dbReference type="NCBIfam" id="NF000585">
    <property type="entry name" value="PRK00010.1"/>
    <property type="match status" value="1"/>
</dbReference>
<dbReference type="PANTHER" id="PTHR11994">
    <property type="entry name" value="60S RIBOSOMAL PROTEIN L11-RELATED"/>
    <property type="match status" value="1"/>
</dbReference>
<dbReference type="Pfam" id="PF00281">
    <property type="entry name" value="Ribosomal_L5"/>
    <property type="match status" value="1"/>
</dbReference>
<dbReference type="Pfam" id="PF00673">
    <property type="entry name" value="Ribosomal_L5_C"/>
    <property type="match status" value="1"/>
</dbReference>
<dbReference type="PIRSF" id="PIRSF002161">
    <property type="entry name" value="Ribosomal_L5"/>
    <property type="match status" value="1"/>
</dbReference>
<dbReference type="SUPFAM" id="SSF55282">
    <property type="entry name" value="RL5-like"/>
    <property type="match status" value="1"/>
</dbReference>
<dbReference type="PROSITE" id="PS00358">
    <property type="entry name" value="RIBOSOMAL_L5"/>
    <property type="match status" value="1"/>
</dbReference>
<name>RL5_ACIBS</name>
<organism>
    <name type="scientific">Acinetobacter baumannii (strain SDF)</name>
    <dbReference type="NCBI Taxonomy" id="509170"/>
    <lineage>
        <taxon>Bacteria</taxon>
        <taxon>Pseudomonadati</taxon>
        <taxon>Pseudomonadota</taxon>
        <taxon>Gammaproteobacteria</taxon>
        <taxon>Moraxellales</taxon>
        <taxon>Moraxellaceae</taxon>
        <taxon>Acinetobacter</taxon>
        <taxon>Acinetobacter calcoaceticus/baumannii complex</taxon>
    </lineage>
</organism>
<gene>
    <name evidence="1" type="primary">rplE</name>
    <name type="ordered locus">ABSDF0435</name>
</gene>
<sequence>MARLKARYNDELKAKLQEELSIKNVMEIPRITKITLNMGVGAAATDKKLLDGAVADMQLIAGQKPVVTLARKSIAGFKIRDGWPIGCKVTLRGDQMYEFLDRLISIAIPRIRDFRGFSAKSFDGRGNYSMGLKEQIVFPEIDFDKIDRIRGMDITITTTARTDDEGRALMRAFGFPFK</sequence>
<accession>B0VQT0</accession>
<comment type="function">
    <text evidence="1">This is one of the proteins that bind and probably mediate the attachment of the 5S RNA into the large ribosomal subunit, where it forms part of the central protuberance. In the 70S ribosome it contacts protein S13 of the 30S subunit (bridge B1b), connecting the 2 subunits; this bridge is implicated in subunit movement. Contacts the P site tRNA; the 5S rRNA and some of its associated proteins might help stabilize positioning of ribosome-bound tRNAs.</text>
</comment>
<comment type="subunit">
    <text evidence="1">Part of the 50S ribosomal subunit; part of the 5S rRNA/L5/L18/L25 subcomplex. Contacts the 5S rRNA and the P site tRNA. Forms a bridge to the 30S subunit in the 70S ribosome.</text>
</comment>
<comment type="similarity">
    <text evidence="1">Belongs to the universal ribosomal protein uL5 family.</text>
</comment>
<evidence type="ECO:0000255" key="1">
    <source>
        <dbReference type="HAMAP-Rule" id="MF_01333"/>
    </source>
</evidence>
<evidence type="ECO:0000305" key="2"/>
<feature type="chain" id="PRO_1000142342" description="Large ribosomal subunit protein uL5">
    <location>
        <begin position="1"/>
        <end position="178"/>
    </location>
</feature>